<sequence length="474" mass="53611">MSRLVVVSNRIAPPDEHAASAGGLAVGILGALKAAGGLWFGWSGETGNEDQPLKKVKKGNITWASFNLSEQDLDEYYNQFSNAVLWPAFHYRLDLVQFQRPAWDGYLRVNALLADKLLPLLQDDDIIWIHDYHLLPFAHELRKRGVNNRIGFFLHIPFPTPEIFNALPTYDTLLEQLCDYDLLGFQTENDRLAFLDCLSNLTRVTTRSAKSHTAWGKAFRTEVYPIGIEPKEIAKQAAGPLPPKLAQLKAELKNVQNIFSVERLDYSKGLPERFLAYEALLEKYPQHHGKIRYTQIAPTSRGDVQAYQDIRHQLENEAGRINGKYGQLGWTPLYYLNQHFDRKLLMKIFRYSDVGLVTPLRDGMNLVAKEYVAAQDPANPGVLVLSQFAGAANELTSALIVNPYDRDEVAAALDRALTMSLAERISRHAEMLDVIVKNDINHWQECFISDLKQIVPRSAESQQRDKVATFPKLA</sequence>
<protein>
    <recommendedName>
        <fullName evidence="7">Trehalose-6-phosphate synthase</fullName>
        <shortName evidence="7">TPS</shortName>
        <ecNumber evidence="11 12">2.4.1.15</ecNumber>
    </recommendedName>
    <alternativeName>
        <fullName evidence="8">Alpha,alpha-trehalose-phosphate synthase [UDP-forming]</fullName>
    </alternativeName>
    <alternativeName>
        <fullName evidence="7">Osmoregulatory trehalose synthesis protein A</fullName>
        <shortName evidence="7">OtsA</shortName>
    </alternativeName>
    <alternativeName>
        <fullName evidence="8">UDP-glucose-glucosephosphate glucosyltransferase</fullName>
    </alternativeName>
</protein>
<reference key="1">
    <citation type="journal article" date="1994" name="Gene">
        <title>Analysis of the otsBA operon for osmoregulatory trehalose synthesis in Escherichia coli and homology of the OtsA and OtsB proteins to the yeast trehalose-6-phosphate synthase/phosphatase complex.</title>
        <authorList>
            <person name="Kaasen I."/>
            <person name="McDougall J."/>
            <person name="Stroem A.R."/>
        </authorList>
    </citation>
    <scope>NUCLEOTIDE SEQUENCE [GENOMIC DNA]</scope>
    <scope>PARTIAL PROTEIN SEQUENCE</scope>
    <source>
        <strain>K12 / CSH7</strain>
    </source>
</reference>
<reference key="2">
    <citation type="journal article" date="1996" name="DNA Res.">
        <title>A 460-kb DNA sequence of the Escherichia coli K-12 genome corresponding to the 40.1-50.0 min region on the linkage map.</title>
        <authorList>
            <person name="Itoh T."/>
            <person name="Aiba H."/>
            <person name="Baba T."/>
            <person name="Fujita K."/>
            <person name="Hayashi K."/>
            <person name="Inada T."/>
            <person name="Isono K."/>
            <person name="Kasai H."/>
            <person name="Kimura S."/>
            <person name="Kitakawa M."/>
            <person name="Kitagawa M."/>
            <person name="Makino K."/>
            <person name="Miki T."/>
            <person name="Mizobuchi K."/>
            <person name="Mori H."/>
            <person name="Mori T."/>
            <person name="Motomura K."/>
            <person name="Nakade S."/>
            <person name="Nakamura Y."/>
            <person name="Nashimoto H."/>
            <person name="Nishio Y."/>
            <person name="Oshima T."/>
            <person name="Saito N."/>
            <person name="Sampei G."/>
            <person name="Seki Y."/>
            <person name="Sivasundaram S."/>
            <person name="Tagami H."/>
            <person name="Takeda J."/>
            <person name="Takemoto K."/>
            <person name="Wada C."/>
            <person name="Yamamoto Y."/>
            <person name="Horiuchi T."/>
        </authorList>
    </citation>
    <scope>NUCLEOTIDE SEQUENCE [LARGE SCALE GENOMIC DNA]</scope>
    <source>
        <strain>K12 / W3110 / ATCC 27325 / DSM 5911</strain>
    </source>
</reference>
<reference key="3">
    <citation type="journal article" date="1997" name="Science">
        <title>The complete genome sequence of Escherichia coli K-12.</title>
        <authorList>
            <person name="Blattner F.R."/>
            <person name="Plunkett G. III"/>
            <person name="Bloch C.A."/>
            <person name="Perna N.T."/>
            <person name="Burland V."/>
            <person name="Riley M."/>
            <person name="Collado-Vides J."/>
            <person name="Glasner J.D."/>
            <person name="Rode C.K."/>
            <person name="Mayhew G.F."/>
            <person name="Gregor J."/>
            <person name="Davis N.W."/>
            <person name="Kirkpatrick H.A."/>
            <person name="Goeden M.A."/>
            <person name="Rose D.J."/>
            <person name="Mau B."/>
            <person name="Shao Y."/>
        </authorList>
    </citation>
    <scope>NUCLEOTIDE SEQUENCE [LARGE SCALE GENOMIC DNA]</scope>
    <source>
        <strain>K12 / MG1655 / ATCC 47076</strain>
    </source>
</reference>
<reference key="4">
    <citation type="journal article" date="2006" name="Mol. Syst. Biol.">
        <title>Highly accurate genome sequences of Escherichia coli K-12 strains MG1655 and W3110.</title>
        <authorList>
            <person name="Hayashi K."/>
            <person name="Morooka N."/>
            <person name="Yamamoto Y."/>
            <person name="Fujita K."/>
            <person name="Isono K."/>
            <person name="Choi S."/>
            <person name="Ohtsubo E."/>
            <person name="Baba T."/>
            <person name="Wanner B.L."/>
            <person name="Mori H."/>
            <person name="Horiuchi T."/>
        </authorList>
    </citation>
    <scope>NUCLEOTIDE SEQUENCE [LARGE SCALE GENOMIC DNA]</scope>
    <source>
        <strain>K12 / W3110 / ATCC 27325 / DSM 5911</strain>
    </source>
</reference>
<reference key="5">
    <citation type="submission" date="1995-05" db="EMBL/GenBank/DDBJ databases">
        <authorList>
            <person name="Estep P."/>
            <person name="O'Keeffe T."/>
            <person name="Robison K."/>
            <person name="Church G.M."/>
        </authorList>
    </citation>
    <scope>NUCLEOTIDE SEQUENCE [GENOMIC DNA] OF 430-474</scope>
    <source>
        <strain>K12 / EMG2</strain>
    </source>
</reference>
<reference key="6">
    <citation type="journal article" date="1988" name="J. Bacteriol.">
        <title>Biochemical and genetic characterization of osmoregulatory trehalose synthesis in Escherichia coli.</title>
        <authorList>
            <person name="Giaever H.M."/>
            <person name="Styrvold O.B."/>
            <person name="Kaasen I."/>
            <person name="Stroem A.R."/>
        </authorList>
    </citation>
    <scope>FUNCTION AS A TREHALOSE-6-PHOSPHATE SYNTHASE</scope>
    <scope>CATALYTIC ACTIVITY</scope>
    <scope>ACTIVITY REGULATION</scope>
    <scope>DISRUPTION PHENOTYPE</scope>
    <scope>INDUCTION</scope>
    <scope>NOMENCLATURE</scope>
    <scope>PATHWAY</scope>
</reference>
<reference key="7">
    <citation type="journal article" date="1991" name="J. Bacteriol.">
        <title>Trehalose synthesis genes are controlled by the putative sigma factor encoded by rpoS and are involved in stationary-phase thermotolerance in Escherichia coli.</title>
        <authorList>
            <person name="Hengge-Aronis R."/>
            <person name="Klein W."/>
            <person name="Lange R."/>
            <person name="Rimmele M."/>
            <person name="Boos W."/>
        </authorList>
    </citation>
    <scope>INDUCTION</scope>
</reference>
<reference key="8">
    <citation type="journal article" date="1992" name="J. Bacteriol.">
        <title>Molecular cloning and physical mapping of the otsBA genes, which encode the osmoregulatory trehalose pathway of Escherichia coli: evidence that transcription is activated by katF (AppR).</title>
        <authorList>
            <person name="Kaasen I."/>
            <person name="Falkenberg P."/>
            <person name="Styrvold O.B."/>
            <person name="Strom A.R."/>
        </authorList>
    </citation>
    <scope>FUNCTION AS A TREHALOSE-6-PHOSPHATE SYNTHASE</scope>
    <scope>INDUCTION</scope>
</reference>
<reference key="9">
    <citation type="journal article" date="2002" name="Proc. Natl. Acad. Sci. U.S.A.">
        <title>Trehalose synthesis is induced upon exposure of Escherichia coli to cold and is essential for viability at low temperatures.</title>
        <authorList>
            <person name="Kandror O."/>
            <person name="DeLeon A."/>
            <person name="Goldberg A.L."/>
        </authorList>
    </citation>
    <scope>FUNCTION AS A TREHALOSE-6-PHOSPHATE SYNTHASE</scope>
    <scope>INDUCTION</scope>
    <source>
        <strain>K12 / MC4100 / ATCC 35695 / DSM 6574</strain>
    </source>
</reference>
<reference key="10">
    <citation type="journal article" date="2002" name="Chem. Biol.">
        <title>Insights into trehalose synthesis provided by the structure of the retaining glucosyltransferase OtsA.</title>
        <authorList>
            <person name="Gibson R.P."/>
            <person name="Turkenburg J.P."/>
            <person name="Charnock S.J."/>
            <person name="Lloyd R."/>
            <person name="Davies G.J."/>
        </authorList>
    </citation>
    <scope>X-RAY CRYSTALLOGRAPHY (2.43 ANGSTROMS) OF 1-457 IN COMPLEX WITH SUBSTRATE ANALOG AND GLUCOSE-6-PHOSPHATE</scope>
    <scope>SUBUNIT</scope>
</reference>
<reference key="11">
    <citation type="journal article" date="2004" name="J. Biol. Chem.">
        <title>The donor subsite of trehalose-6-phosphate synthase: binary complexes with UDP-glucose and UDP-2-deoxy-2-fluoro-glucose at 2 A resolution.</title>
        <authorList>
            <person name="Gibson R.P."/>
            <person name="Tarling C.A."/>
            <person name="Roberts S."/>
            <person name="Withers S.G."/>
            <person name="Davies G.J."/>
        </authorList>
    </citation>
    <scope>X-RAY CRYSTALLOGRAPHY (2.0 ANGSTROMS) IN COMPLEX WITH SUBSTRATE ANALOG</scope>
</reference>
<reference key="12">
    <citation type="journal article" date="2010" name="Angew. Chem. Int. Ed. Engl.">
        <title>Mechanistic insight into enzymatic glycosyl transfer with retention of configuration through analysis of glycomimetic inhibitors.</title>
        <authorList>
            <person name="Errey J.C."/>
            <person name="Lee S.S."/>
            <person name="Gibson R.P."/>
            <person name="Martinez Fleites C."/>
            <person name="Barry C.S."/>
            <person name="Jung P.M."/>
            <person name="O'Sullivan A.C."/>
            <person name="Davis B.G."/>
            <person name="Davies G.J."/>
        </authorList>
    </citation>
    <scope>X-RAY CRYSTALLOGRAPHY (2.20 ANGSTROMS) IN COMPLEX WITH SUBSTRATE ANALOGS</scope>
    <scope>FUNCTION</scope>
    <scope>CATALYTIC ACTIVITY</scope>
    <scope>BIOPHYSICOCHEMICAL PROPERTIES</scope>
    <scope>ACTIVITY REGULATION</scope>
    <scope>REACTION MECHANISM</scope>
</reference>
<evidence type="ECO:0000269" key="1">
    <source>
    </source>
</evidence>
<evidence type="ECO:0000269" key="2">
    <source>
    </source>
</evidence>
<evidence type="ECO:0000269" key="3">
    <source>
    </source>
</evidence>
<evidence type="ECO:0000269" key="4">
    <source>
    </source>
</evidence>
<evidence type="ECO:0000269" key="5">
    <source>
    </source>
</evidence>
<evidence type="ECO:0000269" key="6">
    <source>
    </source>
</evidence>
<evidence type="ECO:0000303" key="7">
    <source>
    </source>
</evidence>
<evidence type="ECO:0000305" key="8"/>
<evidence type="ECO:0000305" key="9">
    <source>
    </source>
</evidence>
<evidence type="ECO:0000305" key="10">
    <source>
    </source>
</evidence>
<evidence type="ECO:0000305" key="11">
    <source>
    </source>
</evidence>
<evidence type="ECO:0000305" key="12">
    <source>
    </source>
</evidence>
<evidence type="ECO:0007744" key="13">
    <source>
        <dbReference type="PDB" id="1GZ5"/>
    </source>
</evidence>
<evidence type="ECO:0007744" key="14">
    <source>
        <dbReference type="PDB" id="1UQT"/>
    </source>
</evidence>
<evidence type="ECO:0007744" key="15">
    <source>
        <dbReference type="PDB" id="1UQU"/>
    </source>
</evidence>
<evidence type="ECO:0007744" key="16">
    <source>
        <dbReference type="PDB" id="2WTX"/>
    </source>
</evidence>
<evidence type="ECO:0007829" key="17">
    <source>
        <dbReference type="PDB" id="1GZ5"/>
    </source>
</evidence>
<evidence type="ECO:0007829" key="18">
    <source>
        <dbReference type="PDB" id="1UQT"/>
    </source>
</evidence>
<organism>
    <name type="scientific">Escherichia coli (strain K12)</name>
    <dbReference type="NCBI Taxonomy" id="83333"/>
    <lineage>
        <taxon>Bacteria</taxon>
        <taxon>Pseudomonadati</taxon>
        <taxon>Pseudomonadota</taxon>
        <taxon>Gammaproteobacteria</taxon>
        <taxon>Enterobacterales</taxon>
        <taxon>Enterobacteriaceae</taxon>
        <taxon>Escherichia</taxon>
    </lineage>
</organism>
<accession>P31677</accession>
<comment type="function">
    <text evidence="1 3 5 6">Catalyzes the transfer of glucose from UDP-alpha-D-glucose (UDP-Glc) to D-glucose 6-phosphate (Glc-6-P) to form trehalose-6-phosphate. Acts with retention of the anomeric configuration of the UDP-sugar donor. Essential for viability of the cells at low temperatures and at elevated osmotic strength.</text>
</comment>
<comment type="catalytic activity">
    <reaction evidence="11 12">
        <text>D-glucose 6-phosphate + UDP-alpha-D-glucose = alpha,alpha-trehalose 6-phosphate + UDP + H(+)</text>
        <dbReference type="Rhea" id="RHEA:18889"/>
        <dbReference type="ChEBI" id="CHEBI:15378"/>
        <dbReference type="ChEBI" id="CHEBI:58223"/>
        <dbReference type="ChEBI" id="CHEBI:58429"/>
        <dbReference type="ChEBI" id="CHEBI:58885"/>
        <dbReference type="ChEBI" id="CHEBI:61548"/>
        <dbReference type="EC" id="2.4.1.15"/>
    </reaction>
</comment>
<comment type="activity regulation">
    <text evidence="5 6">Activated by potassium and other monovalent cations at 0.25 M, but partially inhibited at greater concentrations (PubMed:3131312). Inhibited by validoxylamine A 6'-O-phosphate (PubMed:20077550).</text>
</comment>
<comment type="biophysicochemical properties">
    <kinetics>
        <KM evidence="5">1.7 mM for UDP-Glc</KM>
        <KM evidence="5">7.3 mM for Glc-6-P</KM>
        <text evidence="5">kcat is 34 sec(-1) for glucosyltransferase activity.</text>
    </kinetics>
</comment>
<comment type="pathway">
    <text evidence="12">Glycan biosynthesis; trehalose biosynthesis.</text>
</comment>
<comment type="subunit">
    <text evidence="2">Homotetramer.</text>
</comment>
<comment type="induction">
    <text evidence="1 3 4 6">By cold-shock, osmotic-shock and during the transition to stationary phase. Expression is partially dependent on RpoS.</text>
</comment>
<comment type="disruption phenotype">
    <text evidence="6">Mutants are viable, but osmotically sensitive in minimal media and sensitive to cold shock.</text>
</comment>
<comment type="similarity">
    <text evidence="8">Belongs to the glycosyltransferase 20 family.</text>
</comment>
<dbReference type="EC" id="2.4.1.15" evidence="11 12"/>
<dbReference type="EMBL" id="X69160">
    <property type="protein sequence ID" value="CAA48913.1"/>
    <property type="molecule type" value="Genomic_DNA"/>
</dbReference>
<dbReference type="EMBL" id="U00096">
    <property type="protein sequence ID" value="AAC74966.1"/>
    <property type="molecule type" value="Genomic_DNA"/>
</dbReference>
<dbReference type="EMBL" id="AP009048">
    <property type="protein sequence ID" value="BAA15717.2"/>
    <property type="molecule type" value="Genomic_DNA"/>
</dbReference>
<dbReference type="EMBL" id="U27211">
    <property type="protein sequence ID" value="AAA68604.1"/>
    <property type="molecule type" value="Genomic_DNA"/>
</dbReference>
<dbReference type="PIR" id="I83402">
    <property type="entry name" value="I83402"/>
</dbReference>
<dbReference type="RefSeq" id="NP_416410.1">
    <property type="nucleotide sequence ID" value="NC_000913.3"/>
</dbReference>
<dbReference type="RefSeq" id="WP_001295646.1">
    <property type="nucleotide sequence ID" value="NZ_STEB01000026.1"/>
</dbReference>
<dbReference type="PDB" id="1GZ5">
    <property type="method" value="X-ray"/>
    <property type="resolution" value="2.43 A"/>
    <property type="chains" value="A/B/C/D=2-457"/>
</dbReference>
<dbReference type="PDB" id="1UQT">
    <property type="method" value="X-ray"/>
    <property type="resolution" value="2.00 A"/>
    <property type="chains" value="A/B=2-474"/>
</dbReference>
<dbReference type="PDB" id="1UQU">
    <property type="method" value="X-ray"/>
    <property type="resolution" value="2.00 A"/>
    <property type="chains" value="A/B=2-474"/>
</dbReference>
<dbReference type="PDB" id="2WTX">
    <property type="method" value="X-ray"/>
    <property type="resolution" value="2.20 A"/>
    <property type="chains" value="A/B/C/D=1-474"/>
</dbReference>
<dbReference type="PDB" id="6JAK">
    <property type="method" value="X-ray"/>
    <property type="resolution" value="2.41 A"/>
    <property type="chains" value="A/B/C/D=2-456"/>
</dbReference>
<dbReference type="PDBsum" id="1GZ5"/>
<dbReference type="PDBsum" id="1UQT"/>
<dbReference type="PDBsum" id="1UQU"/>
<dbReference type="PDBsum" id="2WTX"/>
<dbReference type="PDBsum" id="6JAK"/>
<dbReference type="SMR" id="P31677"/>
<dbReference type="BioGRID" id="4259473">
    <property type="interactions" value="17"/>
</dbReference>
<dbReference type="DIP" id="DIP-10417N"/>
<dbReference type="FunCoup" id="P31677">
    <property type="interactions" value="271"/>
</dbReference>
<dbReference type="IntAct" id="P31677">
    <property type="interactions" value="10"/>
</dbReference>
<dbReference type="STRING" id="511145.b1896"/>
<dbReference type="DrugBank" id="DB02007">
    <property type="generic name" value="alpha-D-glucose 6-phosphate"/>
</dbReference>
<dbReference type="DrugBank" id="DB03366">
    <property type="generic name" value="Imidazole"/>
</dbReference>
<dbReference type="DrugBank" id="DB01861">
    <property type="generic name" value="Uridine diphosphate glucose"/>
</dbReference>
<dbReference type="DrugBank" id="DB03435">
    <property type="generic name" value="Uridine-5'-Diphosphate"/>
</dbReference>
<dbReference type="DrugBank" id="DB03488">
    <property type="generic name" value="Uridine-5'-diphosphate-2-deoxy-2-fluoro-alpha-D-galactose"/>
</dbReference>
<dbReference type="CAZy" id="GT20">
    <property type="family name" value="Glycosyltransferase Family 20"/>
</dbReference>
<dbReference type="jPOST" id="P31677"/>
<dbReference type="PaxDb" id="511145-b1896"/>
<dbReference type="EnsemblBacteria" id="AAC74966">
    <property type="protein sequence ID" value="AAC74966"/>
    <property type="gene ID" value="b1896"/>
</dbReference>
<dbReference type="GeneID" id="93776199"/>
<dbReference type="GeneID" id="946405"/>
<dbReference type="KEGG" id="ecj:JW5312"/>
<dbReference type="KEGG" id="eco:b1896"/>
<dbReference type="KEGG" id="ecoc:C3026_10770"/>
<dbReference type="PATRIC" id="fig|1411691.4.peg.353"/>
<dbReference type="EchoBASE" id="EB1701"/>
<dbReference type="eggNOG" id="COG0380">
    <property type="taxonomic scope" value="Bacteria"/>
</dbReference>
<dbReference type="HOGENOM" id="CLU_002351_7_1_6"/>
<dbReference type="InParanoid" id="P31677"/>
<dbReference type="OMA" id="NRTIWPL"/>
<dbReference type="OrthoDB" id="9815690at2"/>
<dbReference type="PhylomeDB" id="P31677"/>
<dbReference type="BioCyc" id="EcoCyc:TREHALOSE6PSYN-MONOMER"/>
<dbReference type="BioCyc" id="MetaCyc:TREHALOSE6PSYN-MONOMER"/>
<dbReference type="BRENDA" id="2.4.1.15">
    <property type="organism ID" value="2026"/>
</dbReference>
<dbReference type="BRENDA" id="3.1.3.12">
    <property type="organism ID" value="2026"/>
</dbReference>
<dbReference type="UniPathway" id="UPA00299"/>
<dbReference type="EvolutionaryTrace" id="P31677"/>
<dbReference type="PRO" id="PR:P31677"/>
<dbReference type="Proteomes" id="UP000000625">
    <property type="component" value="Chromosome"/>
</dbReference>
<dbReference type="GO" id="GO:0003825">
    <property type="term" value="F:alpha,alpha-trehalose-phosphate synthase (UDP-forming) activity"/>
    <property type="evidence" value="ECO:0000314"/>
    <property type="project" value="EcoCyc"/>
</dbReference>
<dbReference type="GO" id="GO:0006974">
    <property type="term" value="P:DNA damage response"/>
    <property type="evidence" value="ECO:0000270"/>
    <property type="project" value="EcoliWiki"/>
</dbReference>
<dbReference type="GO" id="GO:0006970">
    <property type="term" value="P:response to osmotic stress"/>
    <property type="evidence" value="ECO:0000315"/>
    <property type="project" value="EcoCyc"/>
</dbReference>
<dbReference type="GO" id="GO:0006950">
    <property type="term" value="P:response to stress"/>
    <property type="evidence" value="ECO:0000315"/>
    <property type="project" value="EcoCyc"/>
</dbReference>
<dbReference type="GO" id="GO:0005992">
    <property type="term" value="P:trehalose biosynthetic process"/>
    <property type="evidence" value="ECO:0000315"/>
    <property type="project" value="EcoCyc"/>
</dbReference>
<dbReference type="CDD" id="cd03788">
    <property type="entry name" value="GT20_TPS"/>
    <property type="match status" value="1"/>
</dbReference>
<dbReference type="FunFam" id="3.40.50.2000:FF:000024">
    <property type="entry name" value="Trehalose-6-phosphate synthase"/>
    <property type="match status" value="1"/>
</dbReference>
<dbReference type="Gene3D" id="3.40.50.2000">
    <property type="entry name" value="Glycogen Phosphorylase B"/>
    <property type="match status" value="2"/>
</dbReference>
<dbReference type="InterPro" id="IPR001830">
    <property type="entry name" value="Glyco_trans_20"/>
</dbReference>
<dbReference type="InterPro" id="IPR012766">
    <property type="entry name" value="Trehalose_OtsA"/>
</dbReference>
<dbReference type="NCBIfam" id="NF007513">
    <property type="entry name" value="PRK10117.1"/>
    <property type="match status" value="1"/>
</dbReference>
<dbReference type="NCBIfam" id="TIGR02400">
    <property type="entry name" value="trehalose_OtsA"/>
    <property type="match status" value="1"/>
</dbReference>
<dbReference type="PANTHER" id="PTHR10788:SF106">
    <property type="entry name" value="BCDNA.GH08860"/>
    <property type="match status" value="1"/>
</dbReference>
<dbReference type="PANTHER" id="PTHR10788">
    <property type="entry name" value="TREHALOSE-6-PHOSPHATE SYNTHASE"/>
    <property type="match status" value="1"/>
</dbReference>
<dbReference type="Pfam" id="PF00982">
    <property type="entry name" value="Glyco_transf_20"/>
    <property type="match status" value="1"/>
</dbReference>
<dbReference type="SUPFAM" id="SSF53756">
    <property type="entry name" value="UDP-Glycosyltransferase/glycogen phosphorylase"/>
    <property type="match status" value="1"/>
</dbReference>
<keyword id="KW-0002">3D-structure</keyword>
<keyword id="KW-0903">Direct protein sequencing</keyword>
<keyword id="KW-0328">Glycosyltransferase</keyword>
<keyword id="KW-0630">Potassium</keyword>
<keyword id="KW-1185">Reference proteome</keyword>
<keyword id="KW-0346">Stress response</keyword>
<keyword id="KW-0808">Transferase</keyword>
<gene>
    <name evidence="7" type="primary">otsA</name>
    <name type="ordered locus">b1896</name>
    <name type="ordered locus">JW5312</name>
</gene>
<name>OTSA_ECOLI</name>
<proteinExistence type="evidence at protein level"/>
<feature type="initiator methionine" description="Removed">
    <location>
        <position position="1"/>
    </location>
</feature>
<feature type="chain" id="PRO_0000122489" description="Trehalose-6-phosphate synthase">
    <location>
        <begin position="2"/>
        <end position="474"/>
    </location>
</feature>
<feature type="binding site" evidence="2 5 13 16">
    <location>
        <position position="10"/>
    </location>
    <ligand>
        <name>D-glucose 6-phosphate</name>
        <dbReference type="ChEBI" id="CHEBI:61548"/>
    </ligand>
</feature>
<feature type="binding site" evidence="9 10 11 13 16">
    <location>
        <begin position="22"/>
        <end position="23"/>
    </location>
    <ligand>
        <name>UDP-alpha-D-glucose</name>
        <dbReference type="ChEBI" id="CHEBI:58885"/>
    </ligand>
</feature>
<feature type="binding site" evidence="2 5 13 16">
    <location>
        <position position="77"/>
    </location>
    <ligand>
        <name>D-glucose 6-phosphate</name>
        <dbReference type="ChEBI" id="CHEBI:61548"/>
    </ligand>
</feature>
<feature type="binding site" evidence="2 5 13 16">
    <location>
        <position position="131"/>
    </location>
    <ligand>
        <name>D-glucose 6-phosphate</name>
        <dbReference type="ChEBI" id="CHEBI:61548"/>
    </ligand>
</feature>
<feature type="binding site" evidence="9 10 11 13 14 15 16">
    <location>
        <position position="263"/>
    </location>
    <ligand>
        <name>UDP-alpha-D-glucose</name>
        <dbReference type="ChEBI" id="CHEBI:58885"/>
    </ligand>
</feature>
<feature type="binding site" evidence="9 10 11 13 14 15 16">
    <location>
        <position position="268"/>
    </location>
    <ligand>
        <name>UDP-alpha-D-glucose</name>
        <dbReference type="ChEBI" id="CHEBI:58885"/>
    </ligand>
</feature>
<feature type="binding site" evidence="2 5 13 16">
    <location>
        <position position="301"/>
    </location>
    <ligand>
        <name>D-glucose 6-phosphate</name>
        <dbReference type="ChEBI" id="CHEBI:61548"/>
    </ligand>
</feature>
<feature type="binding site" evidence="9 10 11 13 14 15 16">
    <location>
        <position position="340"/>
    </location>
    <ligand>
        <name>UDP-alpha-D-glucose</name>
        <dbReference type="ChEBI" id="CHEBI:58885"/>
    </ligand>
</feature>
<feature type="binding site" evidence="9 10 11 13 14 15 16">
    <location>
        <begin position="366"/>
        <end position="370"/>
    </location>
    <ligand>
        <name>UDP-alpha-D-glucose</name>
        <dbReference type="ChEBI" id="CHEBI:58885"/>
    </ligand>
</feature>
<feature type="site" description="Involved in alpha anomer selectivity" evidence="9">
    <location>
        <position position="86"/>
    </location>
</feature>
<feature type="site" description="Involved in alpha anomer selectivity" evidence="9">
    <location>
        <position position="156"/>
    </location>
</feature>
<feature type="strand" evidence="18">
    <location>
        <begin position="4"/>
        <end position="10"/>
    </location>
</feature>
<feature type="helix" evidence="17">
    <location>
        <begin position="16"/>
        <end position="18"/>
    </location>
</feature>
<feature type="helix" evidence="18">
    <location>
        <begin position="23"/>
        <end position="35"/>
    </location>
</feature>
<feature type="strand" evidence="18">
    <location>
        <begin position="37"/>
        <end position="47"/>
    </location>
</feature>
<feature type="strand" evidence="18">
    <location>
        <begin position="54"/>
        <end position="58"/>
    </location>
</feature>
<feature type="strand" evidence="18">
    <location>
        <begin position="61"/>
        <end position="68"/>
    </location>
</feature>
<feature type="helix" evidence="18">
    <location>
        <begin position="70"/>
        <end position="76"/>
    </location>
</feature>
<feature type="turn" evidence="18">
    <location>
        <begin position="77"/>
        <end position="79"/>
    </location>
</feature>
<feature type="helix" evidence="18">
    <location>
        <begin position="80"/>
        <end position="83"/>
    </location>
</feature>
<feature type="helix" evidence="18">
    <location>
        <begin position="85"/>
        <end position="89"/>
    </location>
</feature>
<feature type="helix" evidence="18">
    <location>
        <begin position="93"/>
        <end position="95"/>
    </location>
</feature>
<feature type="helix" evidence="18">
    <location>
        <begin position="100"/>
        <end position="117"/>
    </location>
</feature>
<feature type="helix" evidence="18">
    <location>
        <begin position="118"/>
        <end position="120"/>
    </location>
</feature>
<feature type="strand" evidence="18">
    <location>
        <begin position="126"/>
        <end position="131"/>
    </location>
</feature>
<feature type="helix" evidence="18">
    <location>
        <begin position="132"/>
        <end position="134"/>
    </location>
</feature>
<feature type="helix" evidence="18">
    <location>
        <begin position="137"/>
        <end position="143"/>
    </location>
</feature>
<feature type="strand" evidence="18">
    <location>
        <begin position="150"/>
        <end position="153"/>
    </location>
</feature>
<feature type="helix" evidence="18">
    <location>
        <begin position="161"/>
        <end position="164"/>
    </location>
</feature>
<feature type="helix" evidence="18">
    <location>
        <begin position="170"/>
        <end position="177"/>
    </location>
</feature>
<feature type="strand" evidence="18">
    <location>
        <begin position="180"/>
        <end position="187"/>
    </location>
</feature>
<feature type="helix" evidence="18">
    <location>
        <begin position="188"/>
        <end position="201"/>
    </location>
</feature>
<feature type="strand" evidence="18">
    <location>
        <begin position="204"/>
        <end position="207"/>
    </location>
</feature>
<feature type="turn" evidence="18">
    <location>
        <begin position="208"/>
        <end position="210"/>
    </location>
</feature>
<feature type="strand" evidence="18">
    <location>
        <begin position="211"/>
        <end position="214"/>
    </location>
</feature>
<feature type="strand" evidence="18">
    <location>
        <begin position="217"/>
        <end position="223"/>
    </location>
</feature>
<feature type="helix" evidence="18">
    <location>
        <begin position="230"/>
        <end position="238"/>
    </location>
</feature>
<feature type="helix" evidence="18">
    <location>
        <begin position="243"/>
        <end position="251"/>
    </location>
</feature>
<feature type="turn" evidence="18">
    <location>
        <begin position="252"/>
        <end position="254"/>
    </location>
</feature>
<feature type="strand" evidence="18">
    <location>
        <begin position="256"/>
        <end position="261"/>
    </location>
</feature>
<feature type="helix" evidence="18">
    <location>
        <begin position="266"/>
        <end position="268"/>
    </location>
</feature>
<feature type="helix" evidence="18">
    <location>
        <begin position="270"/>
        <end position="283"/>
    </location>
</feature>
<feature type="helix" evidence="18">
    <location>
        <begin position="285"/>
        <end position="287"/>
    </location>
</feature>
<feature type="turn" evidence="18">
    <location>
        <begin position="288"/>
        <end position="290"/>
    </location>
</feature>
<feature type="strand" evidence="18">
    <location>
        <begin position="291"/>
        <end position="296"/>
    </location>
</feature>
<feature type="helix" evidence="18">
    <location>
        <begin position="305"/>
        <end position="325"/>
    </location>
</feature>
<feature type="strand" evidence="18">
    <location>
        <begin position="332"/>
        <end position="336"/>
    </location>
</feature>
<feature type="helix" evidence="18">
    <location>
        <begin position="342"/>
        <end position="351"/>
    </location>
</feature>
<feature type="strand" evidence="18">
    <location>
        <begin position="353"/>
        <end position="357"/>
    </location>
</feature>
<feature type="strand" evidence="18">
    <location>
        <begin position="360"/>
        <end position="363"/>
    </location>
</feature>
<feature type="helix" evidence="18">
    <location>
        <begin position="366"/>
        <end position="374"/>
    </location>
</feature>
<feature type="strand" evidence="18">
    <location>
        <begin position="382"/>
        <end position="386"/>
    </location>
</feature>
<feature type="helix" evidence="18">
    <location>
        <begin position="390"/>
        <end position="393"/>
    </location>
</feature>
<feature type="strand" evidence="18">
    <location>
        <begin position="398"/>
        <end position="401"/>
    </location>
</feature>
<feature type="helix" evidence="18">
    <location>
        <begin position="406"/>
        <end position="417"/>
    </location>
</feature>
<feature type="helix" evidence="18">
    <location>
        <begin position="421"/>
        <end position="437"/>
    </location>
</feature>
<feature type="helix" evidence="18">
    <location>
        <begin position="440"/>
        <end position="453"/>
    </location>
</feature>